<name>RECR_DESAH</name>
<organism>
    <name type="scientific">Desulforapulum autotrophicum (strain ATCC 43914 / DSM 3382 / VKM B-1955 / HRM2)</name>
    <name type="common">Desulfobacterium autotrophicum</name>
    <dbReference type="NCBI Taxonomy" id="177437"/>
    <lineage>
        <taxon>Bacteria</taxon>
        <taxon>Pseudomonadati</taxon>
        <taxon>Thermodesulfobacteriota</taxon>
        <taxon>Desulfobacteria</taxon>
        <taxon>Desulfobacterales</taxon>
        <taxon>Desulfobacteraceae</taxon>
        <taxon>Desulforapulum</taxon>
    </lineage>
</organism>
<comment type="function">
    <text evidence="1">May play a role in DNA repair. It seems to be involved in an RecBC-independent recombinational process of DNA repair. It may act with RecF and RecO.</text>
</comment>
<comment type="similarity">
    <text evidence="1">Belongs to the RecR family.</text>
</comment>
<protein>
    <recommendedName>
        <fullName evidence="1">Recombination protein RecR</fullName>
    </recommendedName>
</protein>
<gene>
    <name evidence="1" type="primary">recR</name>
    <name type="ordered locus">HRM2_16450</name>
</gene>
<reference key="1">
    <citation type="journal article" date="2009" name="Environ. Microbiol.">
        <title>Genome sequence of Desulfobacterium autotrophicum HRM2, a marine sulfate reducer oxidizing organic carbon completely to carbon dioxide.</title>
        <authorList>
            <person name="Strittmatter A.W."/>
            <person name="Liesegang H."/>
            <person name="Rabus R."/>
            <person name="Decker I."/>
            <person name="Amann J."/>
            <person name="Andres S."/>
            <person name="Henne A."/>
            <person name="Fricke W.F."/>
            <person name="Martinez-Arias R."/>
            <person name="Bartels D."/>
            <person name="Goesmann A."/>
            <person name="Krause L."/>
            <person name="Puehler A."/>
            <person name="Klenk H.P."/>
            <person name="Richter M."/>
            <person name="Schuler M."/>
            <person name="Gloeckner F.O."/>
            <person name="Meyerdierks A."/>
            <person name="Gottschalk G."/>
            <person name="Amann R."/>
        </authorList>
    </citation>
    <scope>NUCLEOTIDE SEQUENCE [LARGE SCALE GENOMIC DNA]</scope>
    <source>
        <strain>ATCC 43914 / DSM 3382 / VKM B-1955 / HRM2</strain>
    </source>
</reference>
<accession>C0QAG9</accession>
<proteinExistence type="inferred from homology"/>
<feature type="chain" id="PRO_1000201857" description="Recombination protein RecR">
    <location>
        <begin position="1"/>
        <end position="199"/>
    </location>
</feature>
<feature type="domain" description="Toprim" evidence="1">
    <location>
        <begin position="81"/>
        <end position="176"/>
    </location>
</feature>
<feature type="zinc finger region" description="C4-type" evidence="1">
    <location>
        <begin position="58"/>
        <end position="73"/>
    </location>
</feature>
<keyword id="KW-0227">DNA damage</keyword>
<keyword id="KW-0233">DNA recombination</keyword>
<keyword id="KW-0234">DNA repair</keyword>
<keyword id="KW-0479">Metal-binding</keyword>
<keyword id="KW-1185">Reference proteome</keyword>
<keyword id="KW-0862">Zinc</keyword>
<keyword id="KW-0863">Zinc-finger</keyword>
<sequence>MDLYPESILNLIKSLSTLPGIGRRTAERLALHILHAPLHEAQTLANDILELKQKVTLCRTCFSLSDQPECRICSNPRRDASIICVVEKPTDIVAIEKSGAFSGLYHVLGGALSPMDGIGPDELRIRELFSRACSKTTTEVIIATGTNVEGEATAAYISDQLRKKGVNVTRIASGVPMGGDFQYVDQVTMQRAMEGRRGF</sequence>
<evidence type="ECO:0000255" key="1">
    <source>
        <dbReference type="HAMAP-Rule" id="MF_00017"/>
    </source>
</evidence>
<dbReference type="EMBL" id="CP001087">
    <property type="protein sequence ID" value="ACN14754.1"/>
    <property type="molecule type" value="Genomic_DNA"/>
</dbReference>
<dbReference type="RefSeq" id="WP_015903541.1">
    <property type="nucleotide sequence ID" value="NC_012108.1"/>
</dbReference>
<dbReference type="SMR" id="C0QAG9"/>
<dbReference type="STRING" id="177437.HRM2_16450"/>
<dbReference type="KEGG" id="dat:HRM2_16450"/>
<dbReference type="eggNOG" id="COG0353">
    <property type="taxonomic scope" value="Bacteria"/>
</dbReference>
<dbReference type="HOGENOM" id="CLU_060739_1_0_7"/>
<dbReference type="OrthoDB" id="9802672at2"/>
<dbReference type="Proteomes" id="UP000000442">
    <property type="component" value="Chromosome"/>
</dbReference>
<dbReference type="GO" id="GO:0003677">
    <property type="term" value="F:DNA binding"/>
    <property type="evidence" value="ECO:0007669"/>
    <property type="project" value="UniProtKB-UniRule"/>
</dbReference>
<dbReference type="GO" id="GO:0008270">
    <property type="term" value="F:zinc ion binding"/>
    <property type="evidence" value="ECO:0007669"/>
    <property type="project" value="UniProtKB-KW"/>
</dbReference>
<dbReference type="GO" id="GO:0006310">
    <property type="term" value="P:DNA recombination"/>
    <property type="evidence" value="ECO:0007669"/>
    <property type="project" value="UniProtKB-UniRule"/>
</dbReference>
<dbReference type="GO" id="GO:0006281">
    <property type="term" value="P:DNA repair"/>
    <property type="evidence" value="ECO:0007669"/>
    <property type="project" value="UniProtKB-UniRule"/>
</dbReference>
<dbReference type="CDD" id="cd01025">
    <property type="entry name" value="TOPRIM_recR"/>
    <property type="match status" value="1"/>
</dbReference>
<dbReference type="Gene3D" id="3.40.1360.10">
    <property type="match status" value="1"/>
</dbReference>
<dbReference type="Gene3D" id="6.10.250.240">
    <property type="match status" value="1"/>
</dbReference>
<dbReference type="Gene3D" id="1.10.8.420">
    <property type="entry name" value="RecR Domain 1"/>
    <property type="match status" value="1"/>
</dbReference>
<dbReference type="HAMAP" id="MF_00017">
    <property type="entry name" value="RecR"/>
    <property type="match status" value="1"/>
</dbReference>
<dbReference type="InterPro" id="IPR000093">
    <property type="entry name" value="DNA_Rcmb_RecR"/>
</dbReference>
<dbReference type="InterPro" id="IPR023627">
    <property type="entry name" value="Rcmb_RecR"/>
</dbReference>
<dbReference type="InterPro" id="IPR015967">
    <property type="entry name" value="Rcmb_RecR_Znf"/>
</dbReference>
<dbReference type="InterPro" id="IPR006171">
    <property type="entry name" value="TOPRIM_dom"/>
</dbReference>
<dbReference type="InterPro" id="IPR034137">
    <property type="entry name" value="TOPRIM_RecR"/>
</dbReference>
<dbReference type="NCBIfam" id="TIGR00615">
    <property type="entry name" value="recR"/>
    <property type="match status" value="1"/>
</dbReference>
<dbReference type="PANTHER" id="PTHR30446">
    <property type="entry name" value="RECOMBINATION PROTEIN RECR"/>
    <property type="match status" value="1"/>
</dbReference>
<dbReference type="PANTHER" id="PTHR30446:SF0">
    <property type="entry name" value="RECOMBINATION PROTEIN RECR"/>
    <property type="match status" value="1"/>
</dbReference>
<dbReference type="Pfam" id="PF21175">
    <property type="entry name" value="RecR_C"/>
    <property type="match status" value="1"/>
</dbReference>
<dbReference type="Pfam" id="PF21176">
    <property type="entry name" value="RecR_HhH"/>
    <property type="match status" value="1"/>
</dbReference>
<dbReference type="Pfam" id="PF02132">
    <property type="entry name" value="RecR_ZnF"/>
    <property type="match status" value="1"/>
</dbReference>
<dbReference type="Pfam" id="PF13662">
    <property type="entry name" value="Toprim_4"/>
    <property type="match status" value="1"/>
</dbReference>
<dbReference type="SMART" id="SM00493">
    <property type="entry name" value="TOPRIM"/>
    <property type="match status" value="1"/>
</dbReference>
<dbReference type="SUPFAM" id="SSF111304">
    <property type="entry name" value="Recombination protein RecR"/>
    <property type="match status" value="1"/>
</dbReference>
<dbReference type="PROSITE" id="PS01300">
    <property type="entry name" value="RECR"/>
    <property type="match status" value="1"/>
</dbReference>
<dbReference type="PROSITE" id="PS50880">
    <property type="entry name" value="TOPRIM"/>
    <property type="match status" value="1"/>
</dbReference>